<accession>Q5R740</accession>
<keyword id="KW-0007">Acetylation</keyword>
<keyword id="KW-0090">Biological rhythms</keyword>
<keyword id="KW-0119">Carbohydrate metabolism</keyword>
<keyword id="KW-0131">Cell cycle</keyword>
<keyword id="KW-0132">Cell division</keyword>
<keyword id="KW-0963">Cytoplasm</keyword>
<keyword id="KW-0321">Glycogen metabolism</keyword>
<keyword id="KW-0378">Hydrolase</keyword>
<keyword id="KW-0464">Manganese</keyword>
<keyword id="KW-0479">Metal-binding</keyword>
<keyword id="KW-0539">Nucleus</keyword>
<keyword id="KW-0597">Phosphoprotein</keyword>
<keyword id="KW-0904">Protein phosphatase</keyword>
<keyword id="KW-1185">Reference proteome</keyword>
<protein>
    <recommendedName>
        <fullName>Serine/threonine-protein phosphatase PP1-beta catalytic subunit</fullName>
        <shortName>PP-1B</shortName>
        <ecNumber evidence="2">3.1.3.16</ecNumber>
        <ecNumber>3.1.3.53</ecNumber>
    </recommendedName>
</protein>
<feature type="initiator methionine" description="Removed" evidence="2">
    <location>
        <position position="1"/>
    </location>
</feature>
<feature type="chain" id="PRO_0000293479" description="Serine/threonine-protein phosphatase PP1-beta catalytic subunit">
    <location>
        <begin position="2"/>
        <end position="327"/>
    </location>
</feature>
<feature type="region of interest" description="Disordered" evidence="4">
    <location>
        <begin position="305"/>
        <end position="327"/>
    </location>
</feature>
<feature type="active site" description="Proton donor" evidence="1">
    <location>
        <position position="124"/>
    </location>
</feature>
<feature type="binding site" evidence="1">
    <location>
        <position position="63"/>
    </location>
    <ligand>
        <name>Mn(2+)</name>
        <dbReference type="ChEBI" id="CHEBI:29035"/>
        <label>1</label>
    </ligand>
</feature>
<feature type="binding site" evidence="1">
    <location>
        <position position="65"/>
    </location>
    <ligand>
        <name>Mn(2+)</name>
        <dbReference type="ChEBI" id="CHEBI:29035"/>
        <label>1</label>
    </ligand>
</feature>
<feature type="binding site" evidence="1">
    <location>
        <position position="91"/>
    </location>
    <ligand>
        <name>Mn(2+)</name>
        <dbReference type="ChEBI" id="CHEBI:29035"/>
        <label>1</label>
    </ligand>
</feature>
<feature type="binding site" evidence="1">
    <location>
        <position position="91"/>
    </location>
    <ligand>
        <name>Mn(2+)</name>
        <dbReference type="ChEBI" id="CHEBI:29035"/>
        <label>2</label>
    </ligand>
</feature>
<feature type="binding site" evidence="1">
    <location>
        <position position="123"/>
    </location>
    <ligand>
        <name>Mn(2+)</name>
        <dbReference type="ChEBI" id="CHEBI:29035"/>
        <label>2</label>
    </ligand>
</feature>
<feature type="binding site" evidence="1">
    <location>
        <position position="172"/>
    </location>
    <ligand>
        <name>Mn(2+)</name>
        <dbReference type="ChEBI" id="CHEBI:29035"/>
        <label>2</label>
    </ligand>
</feature>
<feature type="binding site" evidence="1">
    <location>
        <position position="247"/>
    </location>
    <ligand>
        <name>Mn(2+)</name>
        <dbReference type="ChEBI" id="CHEBI:29035"/>
        <label>2</label>
    </ligand>
</feature>
<feature type="modified residue" description="N-acetylalanine" evidence="2">
    <location>
        <position position="2"/>
    </location>
</feature>
<feature type="modified residue" description="Phosphothreonine" evidence="2">
    <location>
        <position position="316"/>
    </location>
</feature>
<evidence type="ECO:0000250" key="1"/>
<evidence type="ECO:0000250" key="2">
    <source>
        <dbReference type="UniProtKB" id="P62140"/>
    </source>
</evidence>
<evidence type="ECO:0000250" key="3">
    <source>
        <dbReference type="UniProtKB" id="P62141"/>
    </source>
</evidence>
<evidence type="ECO:0000256" key="4">
    <source>
        <dbReference type="SAM" id="MobiDB-lite"/>
    </source>
</evidence>
<evidence type="ECO:0000305" key="5"/>
<proteinExistence type="evidence at transcript level"/>
<gene>
    <name type="primary">PPP1CB</name>
</gene>
<comment type="function">
    <text evidence="1 2">Protein phosphatase that associates with over 200 regulatory proteins to form highly specific holoenzymes which dephosphorylate hundreds of biological targets. Protein phosphatase (PP1) is essential for cell division, it participates in the regulation of glycogen metabolism, muscle contractility and protein synthesis. Involved in regulation of ionic conductances and long-term synaptic plasticity. Component of the PTW/PP1 phosphatase complex, which plays a role in the control of chromatin structure and cell cycle progression during the transition from mitosis into interphase. In balance with CSNK1D and CSNK1E, determines the circadian period length, through the regulation of the speed and rhythmicity of PER1 and PER2 phosphorylation. May dephosphorylate CSNK1D and CSNK1E (By similarity). Core component of the SHOC2-MRAS-PP1c (SMP) holophosphatase complex that regulates the MAPK pathway activation (By similarity). The SMP complex specifically dephosphorylates the inhibitory phosphorylation at 'Ser-259' of RAF1 kinase, 'Ser-365' of BRAF kinase and 'Ser-214' of ARAF kinase, stimulating their kinase activities (By similarity). The SMP complex enhances the dephosphorylation activity and substrate specificity of PP1c (By similarity).</text>
</comment>
<comment type="catalytic activity">
    <reaction evidence="2">
        <text>O-phospho-L-seryl-[protein] + H2O = L-seryl-[protein] + phosphate</text>
        <dbReference type="Rhea" id="RHEA:20629"/>
        <dbReference type="Rhea" id="RHEA-COMP:9863"/>
        <dbReference type="Rhea" id="RHEA-COMP:11604"/>
        <dbReference type="ChEBI" id="CHEBI:15377"/>
        <dbReference type="ChEBI" id="CHEBI:29999"/>
        <dbReference type="ChEBI" id="CHEBI:43474"/>
        <dbReference type="ChEBI" id="CHEBI:83421"/>
        <dbReference type="EC" id="3.1.3.16"/>
    </reaction>
</comment>
<comment type="catalytic activity">
    <reaction>
        <text>O-phospho-L-threonyl-[protein] + H2O = L-threonyl-[protein] + phosphate</text>
        <dbReference type="Rhea" id="RHEA:47004"/>
        <dbReference type="Rhea" id="RHEA-COMP:11060"/>
        <dbReference type="Rhea" id="RHEA-COMP:11605"/>
        <dbReference type="ChEBI" id="CHEBI:15377"/>
        <dbReference type="ChEBI" id="CHEBI:30013"/>
        <dbReference type="ChEBI" id="CHEBI:43474"/>
        <dbReference type="ChEBI" id="CHEBI:61977"/>
        <dbReference type="EC" id="3.1.3.16"/>
    </reaction>
</comment>
<comment type="catalytic activity">
    <reaction>
        <text>O-phospho-L-seryl-[myosin light chain] + H2O = L-seryl-[myosin light chain] + phosphate</text>
        <dbReference type="Rhea" id="RHEA:12849"/>
        <dbReference type="Rhea" id="RHEA-COMP:13684"/>
        <dbReference type="Rhea" id="RHEA-COMP:13685"/>
        <dbReference type="ChEBI" id="CHEBI:15377"/>
        <dbReference type="ChEBI" id="CHEBI:29999"/>
        <dbReference type="ChEBI" id="CHEBI:43474"/>
        <dbReference type="ChEBI" id="CHEBI:83421"/>
        <dbReference type="EC" id="3.1.3.53"/>
    </reaction>
</comment>
<comment type="catalytic activity">
    <reaction>
        <text>O-phospho-L-threonyl-[myosin light chain] + H2O = L-threonyl-[myosin light chain] + phosphate</text>
        <dbReference type="Rhea" id="RHEA:53988"/>
        <dbReference type="Rhea" id="RHEA-COMP:13686"/>
        <dbReference type="Rhea" id="RHEA-COMP:13687"/>
        <dbReference type="ChEBI" id="CHEBI:15377"/>
        <dbReference type="ChEBI" id="CHEBI:30013"/>
        <dbReference type="ChEBI" id="CHEBI:43474"/>
        <dbReference type="ChEBI" id="CHEBI:61977"/>
        <dbReference type="EC" id="3.1.3.53"/>
    </reaction>
</comment>
<comment type="cofactor">
    <cofactor evidence="1">
        <name>Mn(2+)</name>
        <dbReference type="ChEBI" id="CHEBI:29035"/>
    </cofactor>
    <text evidence="1">Binds 2 manganese ions per subunit.</text>
</comment>
<comment type="activity regulation">
    <text evidence="1">Inhibited by the toxins okadaic acid, tautomycin and microcystin Leu-Arg. The phosphatase activity of the PPP1R15A-PP1 complex toward EIF2S1 is specifically inhibited by Salubrinal, a drug that protects cells from endoplasmic reticulum stress (By similarity).</text>
</comment>
<comment type="subunit">
    <text evidence="2 3">PP1 comprises a catalytic subunit, PPP1CA, PPP1CB or PPP1CC, which is folded into its native form by inhibitor 2 and glycogen synthetase kinase 3, and then complexed to one or several targeting or regulatory subunits. The targeting or regulatory subunits determine the substrate specificity of PP1. PPP1R12A, PPP1R12B and PPP1R12C mediate binding to myosin. PPP1R3A (in skeletal muscle), PPP1R3B (in liver), PPP1R3C, PPP1R3D and PPP1R3D (in brain) mediate binding to glycogen. PPP1R15A and PPP1R15B mediate binding to EIF2S1. Part of a complex containing PPP1R15B, PP1 and NCK1/2. Interacts with PPP1R7 and PPP1R12C. Interacts with PPP1R16B. Component of the PTW/PP1 phosphatase complex, composed of PPP1R10/PNUTS, TOX4, WDR82, and PPP1CA or PPP1CB or PPP1CC. Interacts with PPP1R8. Interacts with PPP1R12A and NUAK1; the interaction is direct. Interacts with TRIM28; the interaction dephosphorylates TRIM28 on 'Ser-824'. Interacts with FOXP3. Interacts with RRP1B. Interacts with SERPINE1. Interacts with LZTR1 (By similarity). Component of the SHOC2-MRAS-PP1c (SMP) complex consisting of SHOC2, GTP-bound M-Ras/MRAS and the catalytic subunit of protein phosphatase 1 (either PPP1CA, PPP1CB or PPP1CC) (By similarity). SHOC2 and PP1c preferably bind M-Ras/MRAS, but they also bind K-Ras/KRAS, N-Ras/NRAS and H-Ras/HRAS; these interactions are GTP-dependent and both SHOC2 and PP1c are required to form a stable complex (By similarity). Interacts with SHOC2 in the absence of Ras GTPases (By similarity).</text>
</comment>
<comment type="subcellular location">
    <subcellularLocation>
        <location evidence="2">Cytoplasm</location>
    </subcellularLocation>
    <subcellularLocation>
        <location evidence="2">Nucleus</location>
    </subcellularLocation>
    <subcellularLocation>
        <location evidence="2">Nucleus</location>
        <location evidence="2">Nucleoplasm</location>
    </subcellularLocation>
    <subcellularLocation>
        <location evidence="2">Nucleus</location>
        <location evidence="2">Nucleolus</location>
    </subcellularLocation>
    <text evidence="2">Highly mobile in cells and can be relocalized through interaction with targeting subunits. In the presence of PPP1R8 relocalizes from the nucleus to nuclear speckles.</text>
</comment>
<comment type="similarity">
    <text evidence="5">Belongs to the PPP phosphatase family. PP-1 subfamily.</text>
</comment>
<name>PP1B_PONAB</name>
<sequence length="327" mass="37187">MADGELNVDSLITRLLEVRGCRPGKIVQMTEAEVRGLCIKSREIFLSQPILLELEAPLKICGDIHGQYTDLLRLFEYGGFPPEANYLFLGDYVDRGKQSLETICLLLAYKIKYPENFFLLRGNHECASINRIYGFYDECKRRFNIKLWKTFTDCFNCLPIAAIVDEKIFCCHGGLSPDLQSMEQIRRIMRPTDVPDTGLLCDLLWSDPDKDVQGWGENDRGVSFTFGADVVSKFLNRHDLDLICRAHQVVEDGYEFFAKRQLVTLFSAPNYCGEFDNAGGMMSVDETLMCSFQILKPSEKKAKYQYGGLNSGRPVTPPRTANPPKKR</sequence>
<organism>
    <name type="scientific">Pongo abelii</name>
    <name type="common">Sumatran orangutan</name>
    <name type="synonym">Pongo pygmaeus abelii</name>
    <dbReference type="NCBI Taxonomy" id="9601"/>
    <lineage>
        <taxon>Eukaryota</taxon>
        <taxon>Metazoa</taxon>
        <taxon>Chordata</taxon>
        <taxon>Craniata</taxon>
        <taxon>Vertebrata</taxon>
        <taxon>Euteleostomi</taxon>
        <taxon>Mammalia</taxon>
        <taxon>Eutheria</taxon>
        <taxon>Euarchontoglires</taxon>
        <taxon>Primates</taxon>
        <taxon>Haplorrhini</taxon>
        <taxon>Catarrhini</taxon>
        <taxon>Hominidae</taxon>
        <taxon>Pongo</taxon>
    </lineage>
</organism>
<dbReference type="EC" id="3.1.3.16" evidence="2"/>
<dbReference type="EC" id="3.1.3.53"/>
<dbReference type="EMBL" id="CR860278">
    <property type="protein sequence ID" value="CAH92420.1"/>
    <property type="molecule type" value="mRNA"/>
</dbReference>
<dbReference type="RefSeq" id="NP_001126427.1">
    <property type="nucleotide sequence ID" value="NM_001132955.1"/>
</dbReference>
<dbReference type="RefSeq" id="XP_009235693.1">
    <property type="nucleotide sequence ID" value="XM_009237418.4"/>
</dbReference>
<dbReference type="RefSeq" id="XP_009235694.1">
    <property type="nucleotide sequence ID" value="XM_009237419.1"/>
</dbReference>
<dbReference type="RefSeq" id="XP_024097718.1">
    <property type="nucleotide sequence ID" value="XM_024241950.3"/>
</dbReference>
<dbReference type="RefSeq" id="XP_054402114.1">
    <property type="nucleotide sequence ID" value="XM_054546139.2"/>
</dbReference>
<dbReference type="RefSeq" id="XP_063569317.1">
    <property type="nucleotide sequence ID" value="XM_063713247.1"/>
</dbReference>
<dbReference type="SMR" id="Q5R740"/>
<dbReference type="FunCoup" id="Q5R740">
    <property type="interactions" value="3322"/>
</dbReference>
<dbReference type="STRING" id="9601.ENSPPYP00000013994"/>
<dbReference type="Ensembl" id="ENSPPYT00000052215.1">
    <property type="protein sequence ID" value="ENSPPYP00000029764.1"/>
    <property type="gene ID" value="ENSPPYG00000033907.1"/>
</dbReference>
<dbReference type="GeneID" id="100173410"/>
<dbReference type="KEGG" id="pon:100173410"/>
<dbReference type="CTD" id="5500"/>
<dbReference type="eggNOG" id="KOG0374">
    <property type="taxonomic scope" value="Eukaryota"/>
</dbReference>
<dbReference type="GeneTree" id="ENSGT00940000154644"/>
<dbReference type="HOGENOM" id="CLU_004962_0_0_1"/>
<dbReference type="InParanoid" id="Q5R740"/>
<dbReference type="OrthoDB" id="1930084at2759"/>
<dbReference type="TreeFam" id="TF354243"/>
<dbReference type="Proteomes" id="UP000001595">
    <property type="component" value="Chromosome 2A"/>
</dbReference>
<dbReference type="GO" id="GO:0005730">
    <property type="term" value="C:nucleolus"/>
    <property type="evidence" value="ECO:0007669"/>
    <property type="project" value="UniProtKB-SubCell"/>
</dbReference>
<dbReference type="GO" id="GO:0005654">
    <property type="term" value="C:nucleoplasm"/>
    <property type="evidence" value="ECO:0007669"/>
    <property type="project" value="UniProtKB-SubCell"/>
</dbReference>
<dbReference type="GO" id="GO:0072357">
    <property type="term" value="C:PTW/PP1 phosphatase complex"/>
    <property type="evidence" value="ECO:0000250"/>
    <property type="project" value="UniProtKB"/>
</dbReference>
<dbReference type="GO" id="GO:0046872">
    <property type="term" value="F:metal ion binding"/>
    <property type="evidence" value="ECO:0007669"/>
    <property type="project" value="UniProtKB-KW"/>
</dbReference>
<dbReference type="GO" id="GO:0017018">
    <property type="term" value="F:myosin phosphatase activity"/>
    <property type="evidence" value="ECO:0000250"/>
    <property type="project" value="UniProtKB"/>
</dbReference>
<dbReference type="GO" id="GO:0050115">
    <property type="term" value="F:myosin-light-chain-phosphatase activity"/>
    <property type="evidence" value="ECO:0000250"/>
    <property type="project" value="UniProtKB"/>
</dbReference>
<dbReference type="GO" id="GO:0016791">
    <property type="term" value="F:phosphatase activity"/>
    <property type="evidence" value="ECO:0000250"/>
    <property type="project" value="UniProtKB"/>
</dbReference>
<dbReference type="GO" id="GO:0051301">
    <property type="term" value="P:cell division"/>
    <property type="evidence" value="ECO:0007669"/>
    <property type="project" value="UniProtKB-KW"/>
</dbReference>
<dbReference type="GO" id="GO:0032922">
    <property type="term" value="P:circadian regulation of gene expression"/>
    <property type="evidence" value="ECO:0000250"/>
    <property type="project" value="UniProtKB"/>
</dbReference>
<dbReference type="GO" id="GO:0043153">
    <property type="term" value="P:entrainment of circadian clock by photoperiod"/>
    <property type="evidence" value="ECO:0000250"/>
    <property type="project" value="UniProtKB"/>
</dbReference>
<dbReference type="GO" id="GO:0005977">
    <property type="term" value="P:glycogen metabolic process"/>
    <property type="evidence" value="ECO:0007669"/>
    <property type="project" value="UniProtKB-KW"/>
</dbReference>
<dbReference type="GO" id="GO:0006470">
    <property type="term" value="P:protein dephosphorylation"/>
    <property type="evidence" value="ECO:0000250"/>
    <property type="project" value="UniProtKB"/>
</dbReference>
<dbReference type="GO" id="GO:0030155">
    <property type="term" value="P:regulation of cell adhesion"/>
    <property type="evidence" value="ECO:0000250"/>
    <property type="project" value="UniProtKB"/>
</dbReference>
<dbReference type="GO" id="GO:0042752">
    <property type="term" value="P:regulation of circadian rhythm"/>
    <property type="evidence" value="ECO:0000250"/>
    <property type="project" value="UniProtKB"/>
</dbReference>
<dbReference type="CDD" id="cd07414">
    <property type="entry name" value="MPP_PP1_PPKL"/>
    <property type="match status" value="1"/>
</dbReference>
<dbReference type="FunFam" id="3.60.21.10:FF:000007">
    <property type="entry name" value="Serine/threonine-protein phosphatase"/>
    <property type="match status" value="1"/>
</dbReference>
<dbReference type="Gene3D" id="3.60.21.10">
    <property type="match status" value="1"/>
</dbReference>
<dbReference type="InterPro" id="IPR004843">
    <property type="entry name" value="Calcineurin-like_PHP_ApaH"/>
</dbReference>
<dbReference type="InterPro" id="IPR029052">
    <property type="entry name" value="Metallo-depent_PP-like"/>
</dbReference>
<dbReference type="InterPro" id="IPR050341">
    <property type="entry name" value="PP1_catalytic_subunit"/>
</dbReference>
<dbReference type="InterPro" id="IPR006186">
    <property type="entry name" value="Ser/Thr-sp_prot-phosphatase"/>
</dbReference>
<dbReference type="InterPro" id="IPR031675">
    <property type="entry name" value="STPPase_N"/>
</dbReference>
<dbReference type="PANTHER" id="PTHR11668">
    <property type="entry name" value="SERINE/THREONINE PROTEIN PHOSPHATASE"/>
    <property type="match status" value="1"/>
</dbReference>
<dbReference type="PANTHER" id="PTHR11668:SF472">
    <property type="entry name" value="SERINE_THREONINE-PROTEIN PHOSPHATASE PP1-BETA CATALYTIC SUBUNIT"/>
    <property type="match status" value="1"/>
</dbReference>
<dbReference type="Pfam" id="PF00149">
    <property type="entry name" value="Metallophos"/>
    <property type="match status" value="1"/>
</dbReference>
<dbReference type="Pfam" id="PF16891">
    <property type="entry name" value="STPPase_N"/>
    <property type="match status" value="1"/>
</dbReference>
<dbReference type="PRINTS" id="PR00114">
    <property type="entry name" value="STPHPHTASE"/>
</dbReference>
<dbReference type="SMART" id="SM00156">
    <property type="entry name" value="PP2Ac"/>
    <property type="match status" value="1"/>
</dbReference>
<dbReference type="SUPFAM" id="SSF56300">
    <property type="entry name" value="Metallo-dependent phosphatases"/>
    <property type="match status" value="1"/>
</dbReference>
<dbReference type="PROSITE" id="PS00125">
    <property type="entry name" value="SER_THR_PHOSPHATASE"/>
    <property type="match status" value="1"/>
</dbReference>
<reference key="1">
    <citation type="submission" date="2004-11" db="EMBL/GenBank/DDBJ databases">
        <authorList>
            <consortium name="The German cDNA consortium"/>
        </authorList>
    </citation>
    <scope>NUCLEOTIDE SEQUENCE [LARGE SCALE MRNA]</scope>
    <source>
        <tissue>Brain cortex</tissue>
    </source>
</reference>